<reference key="1">
    <citation type="submission" date="2007-06" db="EMBL/GenBank/DDBJ databases">
        <title>Complete sequence of Methanococcus vannielii SB.</title>
        <authorList>
            <consortium name="US DOE Joint Genome Institute"/>
            <person name="Copeland A."/>
            <person name="Lucas S."/>
            <person name="Lapidus A."/>
            <person name="Barry K."/>
            <person name="Glavina del Rio T."/>
            <person name="Dalin E."/>
            <person name="Tice H."/>
            <person name="Pitluck S."/>
            <person name="Chain P."/>
            <person name="Malfatti S."/>
            <person name="Shin M."/>
            <person name="Vergez L."/>
            <person name="Schmutz J."/>
            <person name="Larimer F."/>
            <person name="Land M."/>
            <person name="Hauser L."/>
            <person name="Kyrpides N."/>
            <person name="Anderson I."/>
            <person name="Sieprawska-Lupa M."/>
            <person name="Whitman W.B."/>
            <person name="Richardson P."/>
        </authorList>
    </citation>
    <scope>NUCLEOTIDE SEQUENCE [LARGE SCALE GENOMIC DNA]</scope>
    <source>
        <strain>ATCC 35089 / DSM 1224 / JCM 13029 / OCM 148 / SB</strain>
    </source>
</reference>
<gene>
    <name evidence="1" type="primary">aroA</name>
    <name type="ordered locus">Mevan_0520</name>
</gene>
<name>AROA_METVS</name>
<feature type="chain" id="PRO_0000325406" description="3-phosphoshikimate 1-carboxyvinyltransferase">
    <location>
        <begin position="1"/>
        <end position="429"/>
    </location>
</feature>
<feature type="active site" description="Proton acceptor" evidence="1">
    <location>
        <position position="311"/>
    </location>
</feature>
<feature type="binding site" evidence="1">
    <location>
        <position position="20"/>
    </location>
    <ligand>
        <name>3-phosphoshikimate</name>
        <dbReference type="ChEBI" id="CHEBI:145989"/>
    </ligand>
</feature>
<feature type="binding site" evidence="1">
    <location>
        <position position="20"/>
    </location>
    <ligand>
        <name>phosphoenolpyruvate</name>
        <dbReference type="ChEBI" id="CHEBI:58702"/>
    </ligand>
</feature>
<feature type="binding site" evidence="1">
    <location>
        <position position="21"/>
    </location>
    <ligand>
        <name>3-phosphoshikimate</name>
        <dbReference type="ChEBI" id="CHEBI:145989"/>
    </ligand>
</feature>
<feature type="binding site" evidence="1">
    <location>
        <position position="25"/>
    </location>
    <ligand>
        <name>3-phosphoshikimate</name>
        <dbReference type="ChEBI" id="CHEBI:145989"/>
    </ligand>
</feature>
<feature type="binding site" evidence="1">
    <location>
        <position position="89"/>
    </location>
    <ligand>
        <name>phosphoenolpyruvate</name>
        <dbReference type="ChEBI" id="CHEBI:58702"/>
    </ligand>
</feature>
<feature type="binding site" evidence="1">
    <location>
        <position position="118"/>
    </location>
    <ligand>
        <name>phosphoenolpyruvate</name>
        <dbReference type="ChEBI" id="CHEBI:58702"/>
    </ligand>
</feature>
<feature type="binding site" evidence="1">
    <location>
        <position position="164"/>
    </location>
    <ligand>
        <name>3-phosphoshikimate</name>
        <dbReference type="ChEBI" id="CHEBI:145989"/>
    </ligand>
</feature>
<feature type="binding site" evidence="1">
    <location>
        <position position="165"/>
    </location>
    <ligand>
        <name>3-phosphoshikimate</name>
        <dbReference type="ChEBI" id="CHEBI:145989"/>
    </ligand>
</feature>
<feature type="binding site" evidence="1">
    <location>
        <position position="166"/>
    </location>
    <ligand>
        <name>3-phosphoshikimate</name>
        <dbReference type="ChEBI" id="CHEBI:145989"/>
    </ligand>
</feature>
<feature type="binding site" evidence="1">
    <location>
        <position position="166"/>
    </location>
    <ligand>
        <name>phosphoenolpyruvate</name>
        <dbReference type="ChEBI" id="CHEBI:58702"/>
    </ligand>
</feature>
<feature type="binding site" evidence="1">
    <location>
        <position position="192"/>
    </location>
    <ligand>
        <name>3-phosphoshikimate</name>
        <dbReference type="ChEBI" id="CHEBI:145989"/>
    </ligand>
</feature>
<feature type="binding site" evidence="1">
    <location>
        <position position="311"/>
    </location>
    <ligand>
        <name>3-phosphoshikimate</name>
        <dbReference type="ChEBI" id="CHEBI:145989"/>
    </ligand>
</feature>
<feature type="binding site" evidence="1">
    <location>
        <position position="338"/>
    </location>
    <ligand>
        <name>3-phosphoshikimate</name>
        <dbReference type="ChEBI" id="CHEBI:145989"/>
    </ligand>
</feature>
<feature type="binding site" evidence="1">
    <location>
        <position position="342"/>
    </location>
    <ligand>
        <name>phosphoenolpyruvate</name>
        <dbReference type="ChEBI" id="CHEBI:58702"/>
    </ligand>
</feature>
<feature type="binding site" evidence="1">
    <location>
        <position position="384"/>
    </location>
    <ligand>
        <name>phosphoenolpyruvate</name>
        <dbReference type="ChEBI" id="CHEBI:58702"/>
    </ligand>
</feature>
<protein>
    <recommendedName>
        <fullName evidence="1">3-phosphoshikimate 1-carboxyvinyltransferase</fullName>
        <ecNumber evidence="1">2.5.1.19</ecNumber>
    </recommendedName>
    <alternativeName>
        <fullName evidence="1">5-enolpyruvylshikimate-3-phosphate synthase</fullName>
        <shortName evidence="1">EPSP synthase</shortName>
        <shortName evidence="1">EPSPS</shortName>
    </alternativeName>
</protein>
<comment type="function">
    <text evidence="1">Catalyzes the transfer of the enolpyruvyl moiety of phosphoenolpyruvate (PEP) to the 5-hydroxyl of shikimate-3-phosphate (S3P) to produce enolpyruvyl shikimate-3-phosphate and inorganic phosphate.</text>
</comment>
<comment type="catalytic activity">
    <reaction evidence="1">
        <text>3-phosphoshikimate + phosphoenolpyruvate = 5-O-(1-carboxyvinyl)-3-phosphoshikimate + phosphate</text>
        <dbReference type="Rhea" id="RHEA:21256"/>
        <dbReference type="ChEBI" id="CHEBI:43474"/>
        <dbReference type="ChEBI" id="CHEBI:57701"/>
        <dbReference type="ChEBI" id="CHEBI:58702"/>
        <dbReference type="ChEBI" id="CHEBI:145989"/>
        <dbReference type="EC" id="2.5.1.19"/>
    </reaction>
    <physiologicalReaction direction="left-to-right" evidence="1">
        <dbReference type="Rhea" id="RHEA:21257"/>
    </physiologicalReaction>
</comment>
<comment type="pathway">
    <text evidence="1">Metabolic intermediate biosynthesis; chorismate biosynthesis.</text>
</comment>
<comment type="subunit">
    <text evidence="1">Monomer.</text>
</comment>
<comment type="subcellular location">
    <subcellularLocation>
        <location evidence="1">Cytoplasm</location>
    </subcellularLocation>
</comment>
<comment type="similarity">
    <text evidence="1">Belongs to the EPSP synthase family.</text>
</comment>
<sequence>MLIVKRTSEVKGIINAPPSKSYTHRAVISASLANGLSILKNPLNGADCLSSAHACRMLGAEITNEVEKWTIIGSKLKVPDNIIDIGNSGTTLRIITGISSQIPDGYAVITGDDSIRKRPMQPLLDALKQLGIESFSTRNNGIAPIIVKAGKITSNSVKIRGDMSSQFITSLMMTLPFSETDSEIILTTPLKSEPYLNITIDVLDKFGVKIEKIVEENKTGYKIKGKQSYRPCEYTIEGDYSSASYLIATGVLLNSDIEVKNVFKNSKQGDREIIEIVKKMGADVEINENNVKIKGPYNLKGIEIDVTNIPDLVPTIAVLGCFAEGKTVVYNGEHVRLKECDRLNACAVELSKMGADIEEKPDGLIITGTHKLTGSKLKTHDDHRLVMAFTIAGMLADGETVIEGEESVKISFPDFVDKMKSIGCNIEVI</sequence>
<proteinExistence type="inferred from homology"/>
<accession>A6UPK5</accession>
<keyword id="KW-0028">Amino-acid biosynthesis</keyword>
<keyword id="KW-0057">Aromatic amino acid biosynthesis</keyword>
<keyword id="KW-0963">Cytoplasm</keyword>
<keyword id="KW-0808">Transferase</keyword>
<organism>
    <name type="scientific">Methanococcus vannielii (strain ATCC 35089 / DSM 1224 / JCM 13029 / OCM 148 / SB)</name>
    <dbReference type="NCBI Taxonomy" id="406327"/>
    <lineage>
        <taxon>Archaea</taxon>
        <taxon>Methanobacteriati</taxon>
        <taxon>Methanobacteriota</taxon>
        <taxon>Methanomada group</taxon>
        <taxon>Methanococci</taxon>
        <taxon>Methanococcales</taxon>
        <taxon>Methanococcaceae</taxon>
        <taxon>Methanococcus</taxon>
    </lineage>
</organism>
<dbReference type="EC" id="2.5.1.19" evidence="1"/>
<dbReference type="EMBL" id="CP000742">
    <property type="protein sequence ID" value="ABR54427.1"/>
    <property type="molecule type" value="Genomic_DNA"/>
</dbReference>
<dbReference type="RefSeq" id="WP_011972330.1">
    <property type="nucleotide sequence ID" value="NC_009634.1"/>
</dbReference>
<dbReference type="SMR" id="A6UPK5"/>
<dbReference type="STRING" id="406327.Mevan_0520"/>
<dbReference type="GeneID" id="5325721"/>
<dbReference type="KEGG" id="mvn:Mevan_0520"/>
<dbReference type="eggNOG" id="arCOG04134">
    <property type="taxonomic scope" value="Archaea"/>
</dbReference>
<dbReference type="HOGENOM" id="CLU_024321_0_0_2"/>
<dbReference type="OrthoDB" id="43788at2157"/>
<dbReference type="UniPathway" id="UPA00053"/>
<dbReference type="Proteomes" id="UP000001107">
    <property type="component" value="Chromosome"/>
</dbReference>
<dbReference type="GO" id="GO:0005737">
    <property type="term" value="C:cytoplasm"/>
    <property type="evidence" value="ECO:0007669"/>
    <property type="project" value="UniProtKB-SubCell"/>
</dbReference>
<dbReference type="GO" id="GO:0003866">
    <property type="term" value="F:3-phosphoshikimate 1-carboxyvinyltransferase activity"/>
    <property type="evidence" value="ECO:0007669"/>
    <property type="project" value="UniProtKB-UniRule"/>
</dbReference>
<dbReference type="GO" id="GO:0008652">
    <property type="term" value="P:amino acid biosynthetic process"/>
    <property type="evidence" value="ECO:0007669"/>
    <property type="project" value="UniProtKB-KW"/>
</dbReference>
<dbReference type="GO" id="GO:0009073">
    <property type="term" value="P:aromatic amino acid family biosynthetic process"/>
    <property type="evidence" value="ECO:0007669"/>
    <property type="project" value="UniProtKB-KW"/>
</dbReference>
<dbReference type="GO" id="GO:0009423">
    <property type="term" value="P:chorismate biosynthetic process"/>
    <property type="evidence" value="ECO:0007669"/>
    <property type="project" value="UniProtKB-UniRule"/>
</dbReference>
<dbReference type="CDD" id="cd01556">
    <property type="entry name" value="EPSP_synthase"/>
    <property type="match status" value="1"/>
</dbReference>
<dbReference type="FunFam" id="3.65.10.10:FF:000012">
    <property type="entry name" value="Pentafunctional AROM polypeptide"/>
    <property type="match status" value="1"/>
</dbReference>
<dbReference type="Gene3D" id="3.65.10.10">
    <property type="entry name" value="Enolpyruvate transferase domain"/>
    <property type="match status" value="2"/>
</dbReference>
<dbReference type="HAMAP" id="MF_00210">
    <property type="entry name" value="EPSP_synth"/>
    <property type="match status" value="1"/>
</dbReference>
<dbReference type="InterPro" id="IPR001986">
    <property type="entry name" value="Enolpyruvate_Tfrase_dom"/>
</dbReference>
<dbReference type="InterPro" id="IPR036968">
    <property type="entry name" value="Enolpyruvate_Tfrase_sf"/>
</dbReference>
<dbReference type="InterPro" id="IPR006264">
    <property type="entry name" value="EPSP_synthase"/>
</dbReference>
<dbReference type="InterPro" id="IPR023193">
    <property type="entry name" value="EPSP_synthase_CS"/>
</dbReference>
<dbReference type="InterPro" id="IPR013792">
    <property type="entry name" value="RNA3'P_cycl/enolpyr_Trfase_a/b"/>
</dbReference>
<dbReference type="NCBIfam" id="TIGR01356">
    <property type="entry name" value="aroA"/>
    <property type="match status" value="1"/>
</dbReference>
<dbReference type="PANTHER" id="PTHR21090">
    <property type="entry name" value="AROM/DEHYDROQUINATE SYNTHASE"/>
    <property type="match status" value="1"/>
</dbReference>
<dbReference type="PANTHER" id="PTHR21090:SF5">
    <property type="entry name" value="PENTAFUNCTIONAL AROM POLYPEPTIDE"/>
    <property type="match status" value="1"/>
</dbReference>
<dbReference type="Pfam" id="PF00275">
    <property type="entry name" value="EPSP_synthase"/>
    <property type="match status" value="1"/>
</dbReference>
<dbReference type="PIRSF" id="PIRSF000505">
    <property type="entry name" value="EPSPS"/>
    <property type="match status" value="1"/>
</dbReference>
<dbReference type="SUPFAM" id="SSF55205">
    <property type="entry name" value="EPT/RTPC-like"/>
    <property type="match status" value="1"/>
</dbReference>
<dbReference type="PROSITE" id="PS00104">
    <property type="entry name" value="EPSP_SYNTHASE_1"/>
    <property type="match status" value="1"/>
</dbReference>
<dbReference type="PROSITE" id="PS00885">
    <property type="entry name" value="EPSP_SYNTHASE_2"/>
    <property type="match status" value="1"/>
</dbReference>
<evidence type="ECO:0000255" key="1">
    <source>
        <dbReference type="HAMAP-Rule" id="MF_00210"/>
    </source>
</evidence>